<sequence length="236" mass="25960">MKIIPAIDLMDGQVVRLYKGDPKQKTVYSDDPVSVAKKWQKAGADMLHIVDLDATIGTGSNLDLIEKISKELSIPVEVAGGLRNEEIIDRAISFSNRVVIGTMAFKDKEMLQRIAKKYDFSKIVISVDHIDGFIVTHGWQESTKTPLLDAINEFVSMGFTEFLLTNVSKDGTLEGPDLEYLEKACAVQNANVIASGGISNIDDVSDVQRKNAFAVILGKALYENKISIEEAKQLVN</sequence>
<accession>A9A5X1</accession>
<proteinExistence type="inferred from homology"/>
<protein>
    <recommendedName>
        <fullName evidence="1">1-(5-phosphoribosyl)-5-[(5-phosphoribosylamino)methylideneamino] imidazole-4-carboxamide isomerase</fullName>
        <ecNumber evidence="1">5.3.1.16</ecNumber>
    </recommendedName>
    <alternativeName>
        <fullName evidence="1">Phosphoribosylformimino-5-aminoimidazole carboxamide ribotide isomerase</fullName>
    </alternativeName>
</protein>
<keyword id="KW-0028">Amino-acid biosynthesis</keyword>
<keyword id="KW-0963">Cytoplasm</keyword>
<keyword id="KW-0368">Histidine biosynthesis</keyword>
<keyword id="KW-0413">Isomerase</keyword>
<keyword id="KW-1185">Reference proteome</keyword>
<gene>
    <name evidence="1" type="primary">hisA</name>
    <name type="ordered locus">Nmar_1553</name>
</gene>
<organism>
    <name type="scientific">Nitrosopumilus maritimus (strain SCM1)</name>
    <dbReference type="NCBI Taxonomy" id="436308"/>
    <lineage>
        <taxon>Archaea</taxon>
        <taxon>Nitrososphaerota</taxon>
        <taxon>Nitrososphaeria</taxon>
        <taxon>Nitrosopumilales</taxon>
        <taxon>Nitrosopumilaceae</taxon>
        <taxon>Nitrosopumilus</taxon>
    </lineage>
</organism>
<comment type="catalytic activity">
    <reaction evidence="1">
        <text>1-(5-phospho-beta-D-ribosyl)-5-[(5-phospho-beta-D-ribosylamino)methylideneamino]imidazole-4-carboxamide = 5-[(5-phospho-1-deoxy-D-ribulos-1-ylimino)methylamino]-1-(5-phospho-beta-D-ribosyl)imidazole-4-carboxamide</text>
        <dbReference type="Rhea" id="RHEA:15469"/>
        <dbReference type="ChEBI" id="CHEBI:58435"/>
        <dbReference type="ChEBI" id="CHEBI:58525"/>
        <dbReference type="EC" id="5.3.1.16"/>
    </reaction>
</comment>
<comment type="pathway">
    <text evidence="1">Amino-acid biosynthesis; L-histidine biosynthesis; L-histidine from 5-phospho-alpha-D-ribose 1-diphosphate: step 4/9.</text>
</comment>
<comment type="subcellular location">
    <subcellularLocation>
        <location evidence="1">Cytoplasm</location>
    </subcellularLocation>
</comment>
<comment type="similarity">
    <text evidence="1">Belongs to the HisA/HisF family.</text>
</comment>
<reference key="1">
    <citation type="journal article" date="2010" name="Proc. Natl. Acad. Sci. U.S.A.">
        <title>Nitrosopumilus maritimus genome reveals unique mechanisms for nitrification and autotrophy in globally distributed marine crenarchaea.</title>
        <authorList>
            <person name="Walker C.B."/>
            <person name="de la Torre J.R."/>
            <person name="Klotz M.G."/>
            <person name="Urakawa H."/>
            <person name="Pinel N."/>
            <person name="Arp D.J."/>
            <person name="Brochier-Armanet C."/>
            <person name="Chain P.S."/>
            <person name="Chan P.P."/>
            <person name="Gollabgir A."/>
            <person name="Hemp J."/>
            <person name="Hugler M."/>
            <person name="Karr E.A."/>
            <person name="Konneke M."/>
            <person name="Shin M."/>
            <person name="Lawton T.J."/>
            <person name="Lowe T."/>
            <person name="Martens-Habbena W."/>
            <person name="Sayavedra-Soto L.A."/>
            <person name="Lang D."/>
            <person name="Sievert S.M."/>
            <person name="Rosenzweig A.C."/>
            <person name="Manning G."/>
            <person name="Stahl D.A."/>
        </authorList>
    </citation>
    <scope>NUCLEOTIDE SEQUENCE [LARGE SCALE GENOMIC DNA]</scope>
    <source>
        <strain>SCM1</strain>
    </source>
</reference>
<dbReference type="EC" id="5.3.1.16" evidence="1"/>
<dbReference type="EMBL" id="CP000866">
    <property type="protein sequence ID" value="ABX13449.1"/>
    <property type="molecule type" value="Genomic_DNA"/>
</dbReference>
<dbReference type="RefSeq" id="WP_012215936.1">
    <property type="nucleotide sequence ID" value="NC_010085.1"/>
</dbReference>
<dbReference type="SMR" id="A9A5X1"/>
<dbReference type="FunCoup" id="A9A5X1">
    <property type="interactions" value="58"/>
</dbReference>
<dbReference type="STRING" id="436308.Nmar_1553"/>
<dbReference type="EnsemblBacteria" id="ABX13449">
    <property type="protein sequence ID" value="ABX13449"/>
    <property type="gene ID" value="Nmar_1553"/>
</dbReference>
<dbReference type="GeneID" id="5774221"/>
<dbReference type="KEGG" id="nmr:Nmar_1553"/>
<dbReference type="eggNOG" id="arCOG00618">
    <property type="taxonomic scope" value="Archaea"/>
</dbReference>
<dbReference type="HOGENOM" id="CLU_048577_1_1_2"/>
<dbReference type="InParanoid" id="A9A5X1"/>
<dbReference type="OrthoDB" id="52866at2157"/>
<dbReference type="PhylomeDB" id="A9A5X1"/>
<dbReference type="UniPathway" id="UPA00031">
    <property type="reaction ID" value="UER00009"/>
</dbReference>
<dbReference type="Proteomes" id="UP000000792">
    <property type="component" value="Chromosome"/>
</dbReference>
<dbReference type="GO" id="GO:0005737">
    <property type="term" value="C:cytoplasm"/>
    <property type="evidence" value="ECO:0000318"/>
    <property type="project" value="GO_Central"/>
</dbReference>
<dbReference type="GO" id="GO:0003949">
    <property type="term" value="F:1-(5-phosphoribosyl)-5-[(5-phosphoribosylamino)methylideneamino]imidazole-4-carboxamide isomerase activity"/>
    <property type="evidence" value="ECO:0000318"/>
    <property type="project" value="GO_Central"/>
</dbReference>
<dbReference type="GO" id="GO:0000105">
    <property type="term" value="P:L-histidine biosynthetic process"/>
    <property type="evidence" value="ECO:0000318"/>
    <property type="project" value="GO_Central"/>
</dbReference>
<dbReference type="CDD" id="cd04732">
    <property type="entry name" value="HisA"/>
    <property type="match status" value="1"/>
</dbReference>
<dbReference type="FunFam" id="3.20.20.70:FF:000009">
    <property type="entry name" value="1-(5-phosphoribosyl)-5-[(5-phosphoribosylamino)methylideneamino] imidazole-4-carboxamide isomerase"/>
    <property type="match status" value="1"/>
</dbReference>
<dbReference type="Gene3D" id="3.20.20.70">
    <property type="entry name" value="Aldolase class I"/>
    <property type="match status" value="1"/>
</dbReference>
<dbReference type="HAMAP" id="MF_01014">
    <property type="entry name" value="HisA"/>
    <property type="match status" value="1"/>
</dbReference>
<dbReference type="InterPro" id="IPR013785">
    <property type="entry name" value="Aldolase_TIM"/>
</dbReference>
<dbReference type="InterPro" id="IPR006062">
    <property type="entry name" value="His_biosynth"/>
</dbReference>
<dbReference type="InterPro" id="IPR006063">
    <property type="entry name" value="HisA_bact_arch"/>
</dbReference>
<dbReference type="InterPro" id="IPR044524">
    <property type="entry name" value="Isoase_HisA-like"/>
</dbReference>
<dbReference type="InterPro" id="IPR023016">
    <property type="entry name" value="Isoase_HisA-like_bact"/>
</dbReference>
<dbReference type="InterPro" id="IPR011060">
    <property type="entry name" value="RibuloseP-bd_barrel"/>
</dbReference>
<dbReference type="NCBIfam" id="TIGR00007">
    <property type="entry name" value="1-(5-phosphoribosyl)-5-[(5-phosphoribosylamino)methylideneamino]imidazole-4-carboxamide isomerase"/>
    <property type="match status" value="1"/>
</dbReference>
<dbReference type="PANTHER" id="PTHR43090">
    <property type="entry name" value="1-(5-PHOSPHORIBOSYL)-5-[(5-PHOSPHORIBOSYLAMINO)METHYLIDENEAMINO] IMIDAZOLE-4-CARBOXAMIDE ISOMERASE"/>
    <property type="match status" value="1"/>
</dbReference>
<dbReference type="PANTHER" id="PTHR43090:SF2">
    <property type="entry name" value="1-(5-PHOSPHORIBOSYL)-5-[(5-PHOSPHORIBOSYLAMINO)METHYLIDENEAMINO] IMIDAZOLE-4-CARBOXAMIDE ISOMERASE"/>
    <property type="match status" value="1"/>
</dbReference>
<dbReference type="Pfam" id="PF00977">
    <property type="entry name" value="His_biosynth"/>
    <property type="match status" value="1"/>
</dbReference>
<dbReference type="SUPFAM" id="SSF51366">
    <property type="entry name" value="Ribulose-phoshate binding barrel"/>
    <property type="match status" value="1"/>
</dbReference>
<evidence type="ECO:0000255" key="1">
    <source>
        <dbReference type="HAMAP-Rule" id="MF_01014"/>
    </source>
</evidence>
<feature type="chain" id="PRO_1000135133" description="1-(5-phosphoribosyl)-5-[(5-phosphoribosylamino)methylideneamino] imidazole-4-carboxamide isomerase">
    <location>
        <begin position="1"/>
        <end position="236"/>
    </location>
</feature>
<feature type="active site" description="Proton acceptor" evidence="1">
    <location>
        <position position="8"/>
    </location>
</feature>
<feature type="active site" description="Proton donor" evidence="1">
    <location>
        <position position="128"/>
    </location>
</feature>
<name>HIS4_NITMS</name>